<evidence type="ECO:0000250" key="1"/>
<keyword id="KW-0235">DNA replication</keyword>
<keyword id="KW-0239">DNA-directed DNA polymerase</keyword>
<keyword id="KW-0548">Nucleotidyltransferase</keyword>
<keyword id="KW-1185">Reference proteome</keyword>
<keyword id="KW-0808">Transferase</keyword>
<organism>
    <name type="scientific">Escherichia coli O157:H7</name>
    <dbReference type="NCBI Taxonomy" id="83334"/>
    <lineage>
        <taxon>Bacteria</taxon>
        <taxon>Pseudomonadati</taxon>
        <taxon>Pseudomonadota</taxon>
        <taxon>Gammaproteobacteria</taxon>
        <taxon>Enterobacterales</taxon>
        <taxon>Enterobacteriaceae</taxon>
        <taxon>Escherichia</taxon>
    </lineage>
</organism>
<dbReference type="EC" id="2.7.7.7"/>
<dbReference type="EMBL" id="AE005174">
    <property type="protein sequence ID" value="AAG56832.1"/>
    <property type="molecule type" value="Genomic_DNA"/>
</dbReference>
<dbReference type="EMBL" id="BA000007">
    <property type="protein sequence ID" value="BAB35975.1"/>
    <property type="molecule type" value="Genomic_DNA"/>
</dbReference>
<dbReference type="PIR" id="D85796">
    <property type="entry name" value="D85796"/>
</dbReference>
<dbReference type="PIR" id="H90947">
    <property type="entry name" value="H90947"/>
</dbReference>
<dbReference type="RefSeq" id="NP_310579.1">
    <property type="nucleotide sequence ID" value="NC_002695.1"/>
</dbReference>
<dbReference type="RefSeq" id="WP_000916763.1">
    <property type="nucleotide sequence ID" value="NZ_VOAI01000010.1"/>
</dbReference>
<dbReference type="BMRB" id="P0ABT0"/>
<dbReference type="SMR" id="P0ABT0"/>
<dbReference type="STRING" id="155864.Z2891"/>
<dbReference type="GeneID" id="913059"/>
<dbReference type="GeneID" id="93776109"/>
<dbReference type="KEGG" id="ece:Z2891"/>
<dbReference type="KEGG" id="ecs:ECs_2552"/>
<dbReference type="PATRIC" id="fig|386585.9.peg.2675"/>
<dbReference type="eggNOG" id="ENOG5032S2T">
    <property type="taxonomic scope" value="Bacteria"/>
</dbReference>
<dbReference type="HOGENOM" id="CLU_176900_0_0_6"/>
<dbReference type="OMA" id="FRERYNM"/>
<dbReference type="Proteomes" id="UP000000558">
    <property type="component" value="Chromosome"/>
</dbReference>
<dbReference type="Proteomes" id="UP000002519">
    <property type="component" value="Chromosome"/>
</dbReference>
<dbReference type="GO" id="GO:0003677">
    <property type="term" value="F:DNA binding"/>
    <property type="evidence" value="ECO:0007669"/>
    <property type="project" value="InterPro"/>
</dbReference>
<dbReference type="GO" id="GO:0003887">
    <property type="term" value="F:DNA-directed DNA polymerase activity"/>
    <property type="evidence" value="ECO:0007669"/>
    <property type="project" value="UniProtKB-KW"/>
</dbReference>
<dbReference type="GO" id="GO:0006260">
    <property type="term" value="P:DNA replication"/>
    <property type="evidence" value="ECO:0007669"/>
    <property type="project" value="UniProtKB-KW"/>
</dbReference>
<dbReference type="FunFam" id="1.20.58.250:FF:000001">
    <property type="entry name" value="DNA polymerase III, theta subunit"/>
    <property type="match status" value="1"/>
</dbReference>
<dbReference type="Gene3D" id="1.20.58.250">
    <property type="entry name" value="DNA polymerase III-theta"/>
    <property type="match status" value="1"/>
</dbReference>
<dbReference type="InterPro" id="IPR009052">
    <property type="entry name" value="DNA_pol_III_theta_bac"/>
</dbReference>
<dbReference type="InterPro" id="IPR036745">
    <property type="entry name" value="PolIII_theta_sf"/>
</dbReference>
<dbReference type="NCBIfam" id="NF008207">
    <property type="entry name" value="PRK10969.1"/>
    <property type="match status" value="1"/>
</dbReference>
<dbReference type="Pfam" id="PF06440">
    <property type="entry name" value="DNA_pol3_theta"/>
    <property type="match status" value="1"/>
</dbReference>
<dbReference type="SUPFAM" id="SSF46575">
    <property type="entry name" value="DNA polymerase III theta subunit-like"/>
    <property type="match status" value="1"/>
</dbReference>
<proteinExistence type="inferred from homology"/>
<sequence length="76" mass="8846">MLKNLAKLDQTEMDKVNVDLAAAGVAFKERYNMPVIAEAVEREQPEHLRSWFRERLIAHRLASVNLSRLPYEPKLK</sequence>
<gene>
    <name type="primary">holE</name>
    <name type="ordered locus">Z2891</name>
    <name type="ordered locus">ECs2552</name>
</gene>
<accession>P0ABT0</accession>
<accession>P28689</accession>
<reference key="1">
    <citation type="journal article" date="2001" name="Nature">
        <title>Genome sequence of enterohaemorrhagic Escherichia coli O157:H7.</title>
        <authorList>
            <person name="Perna N.T."/>
            <person name="Plunkett G. III"/>
            <person name="Burland V."/>
            <person name="Mau B."/>
            <person name="Glasner J.D."/>
            <person name="Rose D.J."/>
            <person name="Mayhew G.F."/>
            <person name="Evans P.S."/>
            <person name="Gregor J."/>
            <person name="Kirkpatrick H.A."/>
            <person name="Posfai G."/>
            <person name="Hackett J."/>
            <person name="Klink S."/>
            <person name="Boutin A."/>
            <person name="Shao Y."/>
            <person name="Miller L."/>
            <person name="Grotbeck E.J."/>
            <person name="Davis N.W."/>
            <person name="Lim A."/>
            <person name="Dimalanta E.T."/>
            <person name="Potamousis K."/>
            <person name="Apodaca J."/>
            <person name="Anantharaman T.S."/>
            <person name="Lin J."/>
            <person name="Yen G."/>
            <person name="Schwartz D.C."/>
            <person name="Welch R.A."/>
            <person name="Blattner F.R."/>
        </authorList>
    </citation>
    <scope>NUCLEOTIDE SEQUENCE [LARGE SCALE GENOMIC DNA]</scope>
    <source>
        <strain>O157:H7 / EDL933 / ATCC 700927 / EHEC</strain>
    </source>
</reference>
<reference key="2">
    <citation type="journal article" date="2001" name="DNA Res.">
        <title>Complete genome sequence of enterohemorrhagic Escherichia coli O157:H7 and genomic comparison with a laboratory strain K-12.</title>
        <authorList>
            <person name="Hayashi T."/>
            <person name="Makino K."/>
            <person name="Ohnishi M."/>
            <person name="Kurokawa K."/>
            <person name="Ishii K."/>
            <person name="Yokoyama K."/>
            <person name="Han C.-G."/>
            <person name="Ohtsubo E."/>
            <person name="Nakayama K."/>
            <person name="Murata T."/>
            <person name="Tanaka M."/>
            <person name="Tobe T."/>
            <person name="Iida T."/>
            <person name="Takami H."/>
            <person name="Honda T."/>
            <person name="Sasakawa C."/>
            <person name="Ogasawara N."/>
            <person name="Yasunaga T."/>
            <person name="Kuhara S."/>
            <person name="Shiba T."/>
            <person name="Hattori M."/>
            <person name="Shinagawa H."/>
        </authorList>
    </citation>
    <scope>NUCLEOTIDE SEQUENCE [LARGE SCALE GENOMIC DNA]</scope>
    <source>
        <strain>O157:H7 / Sakai / RIMD 0509952 / EHEC</strain>
    </source>
</reference>
<name>HOLE_ECO57</name>
<comment type="function">
    <text evidence="1">DNA polymerase III is a complex, multichain enzyme responsible for most of the replicative synthesis in bacteria. This DNA polymerase also exhibits 3' to 5' exonuclease activity (By similarity).</text>
</comment>
<comment type="function">
    <text evidence="1">The exact function of the theta subunit is unknown.</text>
</comment>
<comment type="catalytic activity">
    <reaction>
        <text>DNA(n) + a 2'-deoxyribonucleoside 5'-triphosphate = DNA(n+1) + diphosphate</text>
        <dbReference type="Rhea" id="RHEA:22508"/>
        <dbReference type="Rhea" id="RHEA-COMP:17339"/>
        <dbReference type="Rhea" id="RHEA-COMP:17340"/>
        <dbReference type="ChEBI" id="CHEBI:33019"/>
        <dbReference type="ChEBI" id="CHEBI:61560"/>
        <dbReference type="ChEBI" id="CHEBI:173112"/>
        <dbReference type="EC" id="2.7.7.7"/>
    </reaction>
</comment>
<comment type="subunit">
    <text evidence="1">The DNA polymerase holoenzyme is a complex that contains 10 different types of subunits. These subunits are organized into 3 functionally essential subassemblies: the pol III core, the beta sliding clamp processivity factor and the clamp-loading complex. The pol III core (subunits alpha,epsilon and theta) contains the polymerase and the 3'-5' exonuclease proofreading activities. The polymerase is tethered to the template via the sliding clamp processivity factor. The clamp-loading complex assembles the beta processivity factor onto the primer template and plays a central role in the organization and communication at the replication fork. This complex contains delta, delta', psi and chi, and copies of either or both of two different DnaX proteins, gamma and tau. The composition of the holoenzyme is, therefore: (alpha,epsilon,theta)[2]-(gamma/tau)[3]-delta,delta', psi,chi-beta[4] (By similarity).</text>
</comment>
<protein>
    <recommendedName>
        <fullName>DNA polymerase III subunit theta</fullName>
        <ecNumber>2.7.7.7</ecNumber>
    </recommendedName>
</protein>
<feature type="chain" id="PRO_0000105523" description="DNA polymerase III subunit theta">
    <location>
        <begin position="1"/>
        <end position="76"/>
    </location>
</feature>